<dbReference type="EMBL" id="CP000076">
    <property type="protein sequence ID" value="AAY95831.1"/>
    <property type="molecule type" value="Genomic_DNA"/>
</dbReference>
<dbReference type="RefSeq" id="WP_011058797.1">
    <property type="nucleotide sequence ID" value="NC_004129.6"/>
</dbReference>
<dbReference type="SMR" id="Q4KJL7"/>
<dbReference type="STRING" id="220664.PFL_0422"/>
<dbReference type="KEGG" id="pfl:PFL_0422"/>
<dbReference type="eggNOG" id="COG1826">
    <property type="taxonomic scope" value="Bacteria"/>
</dbReference>
<dbReference type="HOGENOM" id="CLU_086034_5_1_6"/>
<dbReference type="Proteomes" id="UP000008540">
    <property type="component" value="Chromosome"/>
</dbReference>
<dbReference type="GO" id="GO:0033281">
    <property type="term" value="C:TAT protein transport complex"/>
    <property type="evidence" value="ECO:0007669"/>
    <property type="project" value="UniProtKB-UniRule"/>
</dbReference>
<dbReference type="GO" id="GO:0008320">
    <property type="term" value="F:protein transmembrane transporter activity"/>
    <property type="evidence" value="ECO:0007669"/>
    <property type="project" value="UniProtKB-UniRule"/>
</dbReference>
<dbReference type="GO" id="GO:0043953">
    <property type="term" value="P:protein transport by the Tat complex"/>
    <property type="evidence" value="ECO:0007669"/>
    <property type="project" value="UniProtKB-UniRule"/>
</dbReference>
<dbReference type="FunFam" id="1.20.5.3310:FF:000001">
    <property type="entry name" value="Probable Sec-independent protein translocase protein TatE"/>
    <property type="match status" value="1"/>
</dbReference>
<dbReference type="Gene3D" id="1.20.5.3310">
    <property type="match status" value="1"/>
</dbReference>
<dbReference type="HAMAP" id="MF_00236">
    <property type="entry name" value="TatA_E"/>
    <property type="match status" value="1"/>
</dbReference>
<dbReference type="InterPro" id="IPR003369">
    <property type="entry name" value="TatA/B/E"/>
</dbReference>
<dbReference type="InterPro" id="IPR006312">
    <property type="entry name" value="TatA/E"/>
</dbReference>
<dbReference type="NCBIfam" id="NF001681">
    <property type="entry name" value="PRK00442.1"/>
    <property type="match status" value="1"/>
</dbReference>
<dbReference type="NCBIfam" id="TIGR01411">
    <property type="entry name" value="tatAE"/>
    <property type="match status" value="1"/>
</dbReference>
<dbReference type="PANTHER" id="PTHR42982">
    <property type="entry name" value="SEC-INDEPENDENT PROTEIN TRANSLOCASE PROTEIN TATA"/>
    <property type="match status" value="1"/>
</dbReference>
<dbReference type="PANTHER" id="PTHR42982:SF1">
    <property type="entry name" value="SEC-INDEPENDENT PROTEIN TRANSLOCASE PROTEIN TATA"/>
    <property type="match status" value="1"/>
</dbReference>
<dbReference type="Pfam" id="PF02416">
    <property type="entry name" value="TatA_B_E"/>
    <property type="match status" value="1"/>
</dbReference>
<protein>
    <recommendedName>
        <fullName evidence="1">Sec-independent protein translocase protein TatA</fullName>
    </recommendedName>
</protein>
<organism>
    <name type="scientific">Pseudomonas fluorescens (strain ATCC BAA-477 / NRRL B-23932 / Pf-5)</name>
    <dbReference type="NCBI Taxonomy" id="220664"/>
    <lineage>
        <taxon>Bacteria</taxon>
        <taxon>Pseudomonadati</taxon>
        <taxon>Pseudomonadota</taxon>
        <taxon>Gammaproteobacteria</taxon>
        <taxon>Pseudomonadales</taxon>
        <taxon>Pseudomonadaceae</taxon>
        <taxon>Pseudomonas</taxon>
    </lineage>
</organism>
<feature type="chain" id="PRO_1000044422" description="Sec-independent protein translocase protein TatA">
    <location>
        <begin position="1"/>
        <end position="93"/>
    </location>
</feature>
<feature type="transmembrane region" description="Helical" evidence="1">
    <location>
        <begin position="1"/>
        <end position="21"/>
    </location>
</feature>
<feature type="region of interest" description="Disordered" evidence="2">
    <location>
        <begin position="43"/>
        <end position="93"/>
    </location>
</feature>
<feature type="compositionally biased region" description="Pro residues" evidence="2">
    <location>
        <begin position="52"/>
        <end position="65"/>
    </location>
</feature>
<feature type="compositionally biased region" description="Basic and acidic residues" evidence="2">
    <location>
        <begin position="84"/>
        <end position="93"/>
    </location>
</feature>
<keyword id="KW-0997">Cell inner membrane</keyword>
<keyword id="KW-1003">Cell membrane</keyword>
<keyword id="KW-0472">Membrane</keyword>
<keyword id="KW-0653">Protein transport</keyword>
<keyword id="KW-0811">Translocation</keyword>
<keyword id="KW-0812">Transmembrane</keyword>
<keyword id="KW-1133">Transmembrane helix</keyword>
<keyword id="KW-0813">Transport</keyword>
<gene>
    <name evidence="1" type="primary">tatA</name>
    <name type="ordered locus">PFL_0422</name>
</gene>
<comment type="function">
    <text evidence="1">Part of the twin-arginine translocation (Tat) system that transports large folded proteins containing a characteristic twin-arginine motif in their signal peptide across membranes. TatA could form the protein-conducting channel of the Tat system.</text>
</comment>
<comment type="subunit">
    <text evidence="1">The Tat system comprises two distinct complexes: a TatABC complex, containing multiple copies of TatA, TatB and TatC subunits, and a separate TatA complex, containing only TatA subunits. Substrates initially bind to the TatABC complex, which probably triggers association of the separate TatA complex to form the active translocon.</text>
</comment>
<comment type="subcellular location">
    <subcellularLocation>
        <location evidence="1">Cell inner membrane</location>
        <topology evidence="1">Single-pass membrane protein</topology>
    </subcellularLocation>
</comment>
<comment type="similarity">
    <text evidence="1">Belongs to the TatA/E family.</text>
</comment>
<sequence length="93" mass="10276">MGIFDWKHWIVILVVVVLVFGTKKLKNLGTDVGESIKGFRKAMNDDEKPAEPVVPPAAQPVPPVQPQQSAPLNQPHTIDVQAQKVEEPTRKDS</sequence>
<evidence type="ECO:0000255" key="1">
    <source>
        <dbReference type="HAMAP-Rule" id="MF_00236"/>
    </source>
</evidence>
<evidence type="ECO:0000256" key="2">
    <source>
        <dbReference type="SAM" id="MobiDB-lite"/>
    </source>
</evidence>
<name>TATA_PSEF5</name>
<proteinExistence type="inferred from homology"/>
<reference key="1">
    <citation type="journal article" date="2005" name="Nat. Biotechnol.">
        <title>Complete genome sequence of the plant commensal Pseudomonas fluorescens Pf-5.</title>
        <authorList>
            <person name="Paulsen I.T."/>
            <person name="Press C.M."/>
            <person name="Ravel J."/>
            <person name="Kobayashi D.Y."/>
            <person name="Myers G.S.A."/>
            <person name="Mavrodi D.V."/>
            <person name="DeBoy R.T."/>
            <person name="Seshadri R."/>
            <person name="Ren Q."/>
            <person name="Madupu R."/>
            <person name="Dodson R.J."/>
            <person name="Durkin A.S."/>
            <person name="Brinkac L.M."/>
            <person name="Daugherty S.C."/>
            <person name="Sullivan S.A."/>
            <person name="Rosovitz M.J."/>
            <person name="Gwinn M.L."/>
            <person name="Zhou L."/>
            <person name="Schneider D.J."/>
            <person name="Cartinhour S.W."/>
            <person name="Nelson W.C."/>
            <person name="Weidman J."/>
            <person name="Watkins K."/>
            <person name="Tran K."/>
            <person name="Khouri H."/>
            <person name="Pierson E.A."/>
            <person name="Pierson L.S. III"/>
            <person name="Thomashow L.S."/>
            <person name="Loper J.E."/>
        </authorList>
    </citation>
    <scope>NUCLEOTIDE SEQUENCE [LARGE SCALE GENOMIC DNA]</scope>
    <source>
        <strain>ATCC BAA-477 / NRRL B-23932 / Pf-5</strain>
    </source>
</reference>
<accession>Q4KJL7</accession>